<feature type="chain" id="PRO_1000082278" description="Adenosylhomocysteinase">
    <location>
        <begin position="1"/>
        <end position="438"/>
    </location>
</feature>
<feature type="binding site" evidence="1">
    <location>
        <position position="61"/>
    </location>
    <ligand>
        <name>substrate</name>
    </ligand>
</feature>
<feature type="binding site" evidence="1">
    <location>
        <position position="137"/>
    </location>
    <ligand>
        <name>substrate</name>
    </ligand>
</feature>
<feature type="binding site" evidence="1">
    <location>
        <position position="162"/>
    </location>
    <ligand>
        <name>substrate</name>
    </ligand>
</feature>
<feature type="binding site" evidence="1">
    <location>
        <begin position="163"/>
        <end position="165"/>
    </location>
    <ligand>
        <name>NAD(+)</name>
        <dbReference type="ChEBI" id="CHEBI:57540"/>
    </ligand>
</feature>
<feature type="binding site" evidence="1">
    <location>
        <position position="192"/>
    </location>
    <ligand>
        <name>substrate</name>
    </ligand>
</feature>
<feature type="binding site" evidence="1">
    <location>
        <position position="196"/>
    </location>
    <ligand>
        <name>substrate</name>
    </ligand>
</feature>
<feature type="binding site" evidence="1">
    <location>
        <position position="197"/>
    </location>
    <ligand>
        <name>NAD(+)</name>
        <dbReference type="ChEBI" id="CHEBI:57540"/>
    </ligand>
</feature>
<feature type="binding site" evidence="1">
    <location>
        <begin position="226"/>
        <end position="231"/>
    </location>
    <ligand>
        <name>NAD(+)</name>
        <dbReference type="ChEBI" id="CHEBI:57540"/>
    </ligand>
</feature>
<feature type="binding site" evidence="1">
    <location>
        <position position="249"/>
    </location>
    <ligand>
        <name>NAD(+)</name>
        <dbReference type="ChEBI" id="CHEBI:57540"/>
    </ligand>
</feature>
<feature type="binding site" evidence="1">
    <location>
        <position position="284"/>
    </location>
    <ligand>
        <name>NAD(+)</name>
        <dbReference type="ChEBI" id="CHEBI:57540"/>
    </ligand>
</feature>
<feature type="binding site" evidence="1">
    <location>
        <begin position="305"/>
        <end position="307"/>
    </location>
    <ligand>
        <name>NAD(+)</name>
        <dbReference type="ChEBI" id="CHEBI:57540"/>
    </ligand>
</feature>
<feature type="binding site" evidence="1">
    <location>
        <position position="352"/>
    </location>
    <ligand>
        <name>NAD(+)</name>
        <dbReference type="ChEBI" id="CHEBI:57540"/>
    </ligand>
</feature>
<reference key="1">
    <citation type="journal article" date="2009" name="Appl. Environ. Microbiol.">
        <title>Novel features of the polysaccharide-digesting gliding bacterium Flavobacterium johnsoniae as revealed by genome sequence analysis.</title>
        <authorList>
            <person name="McBride M.J."/>
            <person name="Xie G."/>
            <person name="Martens E.C."/>
            <person name="Lapidus A."/>
            <person name="Henrissat B."/>
            <person name="Rhodes R.G."/>
            <person name="Goltsman E."/>
            <person name="Wang W."/>
            <person name="Xu J."/>
            <person name="Hunnicutt D.W."/>
            <person name="Staroscik A.M."/>
            <person name="Hoover T.R."/>
            <person name="Cheng Y.Q."/>
            <person name="Stein J.L."/>
        </authorList>
    </citation>
    <scope>NUCLEOTIDE SEQUENCE [LARGE SCALE GENOMIC DNA]</scope>
    <source>
        <strain>ATCC 17061 / DSM 2064 / JCM 8514 / BCRC 14874 / CCUG 350202 / NBRC 14942 / NCIMB 11054 / UW101</strain>
    </source>
</reference>
<name>SAHH_FLAJ1</name>
<organism>
    <name type="scientific">Flavobacterium johnsoniae (strain ATCC 17061 / DSM 2064 / JCM 8514 / BCRC 14874 / CCUG 350202 / NBRC 14942 / NCIMB 11054 / UW101)</name>
    <name type="common">Cytophaga johnsonae</name>
    <dbReference type="NCBI Taxonomy" id="376686"/>
    <lineage>
        <taxon>Bacteria</taxon>
        <taxon>Pseudomonadati</taxon>
        <taxon>Bacteroidota</taxon>
        <taxon>Flavobacteriia</taxon>
        <taxon>Flavobacteriales</taxon>
        <taxon>Flavobacteriaceae</taxon>
        <taxon>Flavobacterium</taxon>
    </lineage>
</organism>
<comment type="function">
    <text evidence="1">May play a key role in the regulation of the intracellular concentration of adenosylhomocysteine.</text>
</comment>
<comment type="catalytic activity">
    <reaction evidence="1">
        <text>S-adenosyl-L-homocysteine + H2O = L-homocysteine + adenosine</text>
        <dbReference type="Rhea" id="RHEA:21708"/>
        <dbReference type="ChEBI" id="CHEBI:15377"/>
        <dbReference type="ChEBI" id="CHEBI:16335"/>
        <dbReference type="ChEBI" id="CHEBI:57856"/>
        <dbReference type="ChEBI" id="CHEBI:58199"/>
        <dbReference type="EC" id="3.13.2.1"/>
    </reaction>
</comment>
<comment type="cofactor">
    <cofactor evidence="1">
        <name>NAD(+)</name>
        <dbReference type="ChEBI" id="CHEBI:57540"/>
    </cofactor>
    <text evidence="1">Binds 1 NAD(+) per subunit.</text>
</comment>
<comment type="pathway">
    <text evidence="1">Amino-acid biosynthesis; L-homocysteine biosynthesis; L-homocysteine from S-adenosyl-L-homocysteine: step 1/1.</text>
</comment>
<comment type="subcellular location">
    <subcellularLocation>
        <location evidence="1">Cytoplasm</location>
    </subcellularLocation>
</comment>
<comment type="similarity">
    <text evidence="1">Belongs to the adenosylhomocysteinase family.</text>
</comment>
<gene>
    <name evidence="1" type="primary">ahcY</name>
    <name type="ordered locus">Fjoh_1579</name>
</gene>
<keyword id="KW-0963">Cytoplasm</keyword>
<keyword id="KW-0378">Hydrolase</keyword>
<keyword id="KW-0520">NAD</keyword>
<keyword id="KW-0554">One-carbon metabolism</keyword>
<evidence type="ECO:0000255" key="1">
    <source>
        <dbReference type="HAMAP-Rule" id="MF_00563"/>
    </source>
</evidence>
<proteinExistence type="inferred from homology"/>
<sequence length="438" mass="48002">MSTTTTPYVAFKVKDISLAAWGRKEIELAEAEMPGLMALRAEYKDEQPLKGARIAGCLHMTIQTAVLIETLIALGAEVTWSSCNIFSTQDQAAAAIAAAGISVYAWKGLDEESFDWCIEQTLFFGEERKPLNMILDDGGDLTNMVIDRYPELVAGIKGLSEETTTGVHRLYERVKAGTLPMPAININDSVTKSKFDNKYGCKESAVDAVRRATDLMLAGKRVVVCGYGDVGKGTAASFRGAGSIVTVTEIDPICALQAAMDGYEVKKLNTVIANADIIITTTGNKDIVLGEHFEQMKDKTVVCNIGHFDNEIDMAWLNKNHGASKIEIKPQVDKYNINGKDIIILAEGRLVNLGCATGHPSFVMSNSFTNQTLAQIELWNNSAAYKNEVYMLPKHLDEKVAALHLAKLGVELEVLREDQAAYIGVEVQGPFKPEYYRY</sequence>
<dbReference type="EC" id="3.13.2.1" evidence="1"/>
<dbReference type="EMBL" id="CP000685">
    <property type="protein sequence ID" value="ABQ04611.1"/>
    <property type="molecule type" value="Genomic_DNA"/>
</dbReference>
<dbReference type="RefSeq" id="WP_012023655.1">
    <property type="nucleotide sequence ID" value="NZ_MUGZ01000017.1"/>
</dbReference>
<dbReference type="SMR" id="A5FJK3"/>
<dbReference type="STRING" id="376686.Fjoh_1579"/>
<dbReference type="KEGG" id="fjo:Fjoh_1579"/>
<dbReference type="eggNOG" id="COG0499">
    <property type="taxonomic scope" value="Bacteria"/>
</dbReference>
<dbReference type="HOGENOM" id="CLU_025194_2_1_10"/>
<dbReference type="OrthoDB" id="9802717at2"/>
<dbReference type="UniPathway" id="UPA00314">
    <property type="reaction ID" value="UER00076"/>
</dbReference>
<dbReference type="Proteomes" id="UP000006694">
    <property type="component" value="Chromosome"/>
</dbReference>
<dbReference type="GO" id="GO:0005829">
    <property type="term" value="C:cytosol"/>
    <property type="evidence" value="ECO:0007669"/>
    <property type="project" value="TreeGrafter"/>
</dbReference>
<dbReference type="GO" id="GO:0004013">
    <property type="term" value="F:adenosylhomocysteinase activity"/>
    <property type="evidence" value="ECO:0007669"/>
    <property type="project" value="UniProtKB-UniRule"/>
</dbReference>
<dbReference type="GO" id="GO:0071269">
    <property type="term" value="P:L-homocysteine biosynthetic process"/>
    <property type="evidence" value="ECO:0007669"/>
    <property type="project" value="UniProtKB-UniRule"/>
</dbReference>
<dbReference type="GO" id="GO:0006730">
    <property type="term" value="P:one-carbon metabolic process"/>
    <property type="evidence" value="ECO:0007669"/>
    <property type="project" value="UniProtKB-KW"/>
</dbReference>
<dbReference type="GO" id="GO:0033353">
    <property type="term" value="P:S-adenosylmethionine cycle"/>
    <property type="evidence" value="ECO:0007669"/>
    <property type="project" value="TreeGrafter"/>
</dbReference>
<dbReference type="CDD" id="cd00401">
    <property type="entry name" value="SAHH"/>
    <property type="match status" value="1"/>
</dbReference>
<dbReference type="FunFam" id="3.40.50.1480:FF:000004">
    <property type="entry name" value="Adenosylhomocysteinase"/>
    <property type="match status" value="1"/>
</dbReference>
<dbReference type="FunFam" id="3.40.50.720:FF:000004">
    <property type="entry name" value="Adenosylhomocysteinase"/>
    <property type="match status" value="1"/>
</dbReference>
<dbReference type="Gene3D" id="3.40.50.1480">
    <property type="entry name" value="Adenosylhomocysteinase-like"/>
    <property type="match status" value="1"/>
</dbReference>
<dbReference type="Gene3D" id="3.40.50.720">
    <property type="entry name" value="NAD(P)-binding Rossmann-like Domain"/>
    <property type="match status" value="1"/>
</dbReference>
<dbReference type="HAMAP" id="MF_00563">
    <property type="entry name" value="AdoHcyase"/>
    <property type="match status" value="1"/>
</dbReference>
<dbReference type="InterPro" id="IPR042172">
    <property type="entry name" value="Adenosylhomocyst_ase-like_sf"/>
</dbReference>
<dbReference type="InterPro" id="IPR000043">
    <property type="entry name" value="Adenosylhomocysteinase-like"/>
</dbReference>
<dbReference type="InterPro" id="IPR015878">
    <property type="entry name" value="Ado_hCys_hydrolase_NAD-bd"/>
</dbReference>
<dbReference type="InterPro" id="IPR036291">
    <property type="entry name" value="NAD(P)-bd_dom_sf"/>
</dbReference>
<dbReference type="InterPro" id="IPR020082">
    <property type="entry name" value="S-Ado-L-homoCys_hydrolase_CS"/>
</dbReference>
<dbReference type="NCBIfam" id="TIGR00936">
    <property type="entry name" value="ahcY"/>
    <property type="match status" value="1"/>
</dbReference>
<dbReference type="NCBIfam" id="NF004005">
    <property type="entry name" value="PRK05476.2-3"/>
    <property type="match status" value="1"/>
</dbReference>
<dbReference type="PANTHER" id="PTHR23420">
    <property type="entry name" value="ADENOSYLHOMOCYSTEINASE"/>
    <property type="match status" value="1"/>
</dbReference>
<dbReference type="PANTHER" id="PTHR23420:SF0">
    <property type="entry name" value="ADENOSYLHOMOCYSTEINASE"/>
    <property type="match status" value="1"/>
</dbReference>
<dbReference type="Pfam" id="PF05221">
    <property type="entry name" value="AdoHcyase"/>
    <property type="match status" value="2"/>
</dbReference>
<dbReference type="Pfam" id="PF00670">
    <property type="entry name" value="AdoHcyase_NAD"/>
    <property type="match status" value="1"/>
</dbReference>
<dbReference type="PIRSF" id="PIRSF001109">
    <property type="entry name" value="Ad_hcy_hydrolase"/>
    <property type="match status" value="1"/>
</dbReference>
<dbReference type="SMART" id="SM00996">
    <property type="entry name" value="AdoHcyase"/>
    <property type="match status" value="1"/>
</dbReference>
<dbReference type="SMART" id="SM00997">
    <property type="entry name" value="AdoHcyase_NAD"/>
    <property type="match status" value="1"/>
</dbReference>
<dbReference type="SUPFAM" id="SSF52283">
    <property type="entry name" value="Formate/glycerate dehydrogenase catalytic domain-like"/>
    <property type="match status" value="1"/>
</dbReference>
<dbReference type="SUPFAM" id="SSF51735">
    <property type="entry name" value="NAD(P)-binding Rossmann-fold domains"/>
    <property type="match status" value="1"/>
</dbReference>
<dbReference type="PROSITE" id="PS00738">
    <property type="entry name" value="ADOHCYASE_1"/>
    <property type="match status" value="1"/>
</dbReference>
<dbReference type="PROSITE" id="PS00739">
    <property type="entry name" value="ADOHCYASE_2"/>
    <property type="match status" value="1"/>
</dbReference>
<protein>
    <recommendedName>
        <fullName evidence="1">Adenosylhomocysteinase</fullName>
        <ecNumber evidence="1">3.13.2.1</ecNumber>
    </recommendedName>
    <alternativeName>
        <fullName evidence="1">S-adenosyl-L-homocysteine hydrolase</fullName>
        <shortName evidence="1">AdoHcyase</shortName>
    </alternativeName>
</protein>
<accession>A5FJK3</accession>